<evidence type="ECO:0000255" key="1">
    <source>
        <dbReference type="HAMAP-Rule" id="MF_00285"/>
    </source>
</evidence>
<organism>
    <name type="scientific">Thermoplasma volcanium (strain ATCC 51530 / DSM 4299 / JCM 9571 / NBRC 15438 / GSS1)</name>
    <dbReference type="NCBI Taxonomy" id="273116"/>
    <lineage>
        <taxon>Archaea</taxon>
        <taxon>Methanobacteriati</taxon>
        <taxon>Thermoplasmatota</taxon>
        <taxon>Thermoplasmata</taxon>
        <taxon>Thermoplasmatales</taxon>
        <taxon>Thermoplasmataceae</taxon>
        <taxon>Thermoplasma</taxon>
    </lineage>
</organism>
<gene>
    <name evidence="1" type="primary">kdpB</name>
    <name type="ordered locus">TV0500</name>
    <name type="ORF">TVG0489285</name>
</gene>
<reference key="1">
    <citation type="journal article" date="2000" name="Proc. Natl. Acad. Sci. U.S.A.">
        <title>Archaeal adaptation to higher temperatures revealed by genomic sequence of Thermoplasma volcanium.</title>
        <authorList>
            <person name="Kawashima T."/>
            <person name="Amano N."/>
            <person name="Koike H."/>
            <person name="Makino S."/>
            <person name="Higuchi S."/>
            <person name="Kawashima-Ohya Y."/>
            <person name="Watanabe K."/>
            <person name="Yamazaki M."/>
            <person name="Kanehori K."/>
            <person name="Kawamoto T."/>
            <person name="Nunoshiba T."/>
            <person name="Yamamoto Y."/>
            <person name="Aramaki H."/>
            <person name="Makino K."/>
            <person name="Suzuki M."/>
        </authorList>
    </citation>
    <scope>NUCLEOTIDE SEQUENCE [LARGE SCALE GENOMIC DNA]</scope>
    <source>
        <strain>ATCC 51530 / DSM 4299 / JCM 9571 / NBRC 15438 / GSS1</strain>
    </source>
</reference>
<name>KDPB_THEVO</name>
<dbReference type="EC" id="7.2.2.6" evidence="1"/>
<dbReference type="EMBL" id="BA000011">
    <property type="protein sequence ID" value="BAB59642.1"/>
    <property type="molecule type" value="Genomic_DNA"/>
</dbReference>
<dbReference type="RefSeq" id="WP_010916758.1">
    <property type="nucleotide sequence ID" value="NC_002689.2"/>
</dbReference>
<dbReference type="SMR" id="Q97BF6"/>
<dbReference type="STRING" id="273116.gene:9381283"/>
<dbReference type="PaxDb" id="273116-14324715"/>
<dbReference type="GeneID" id="1441016"/>
<dbReference type="KEGG" id="tvo:TVG0489285"/>
<dbReference type="eggNOG" id="arCOG01577">
    <property type="taxonomic scope" value="Archaea"/>
</dbReference>
<dbReference type="HOGENOM" id="CLU_025728_2_0_2"/>
<dbReference type="OrthoDB" id="8588at2157"/>
<dbReference type="PhylomeDB" id="Q97BF6"/>
<dbReference type="BRENDA" id="7.2.2.6">
    <property type="organism ID" value="6326"/>
</dbReference>
<dbReference type="Proteomes" id="UP000001017">
    <property type="component" value="Chromosome"/>
</dbReference>
<dbReference type="GO" id="GO:0005886">
    <property type="term" value="C:plasma membrane"/>
    <property type="evidence" value="ECO:0007669"/>
    <property type="project" value="UniProtKB-SubCell"/>
</dbReference>
<dbReference type="GO" id="GO:0005524">
    <property type="term" value="F:ATP binding"/>
    <property type="evidence" value="ECO:0007669"/>
    <property type="project" value="UniProtKB-UniRule"/>
</dbReference>
<dbReference type="GO" id="GO:0016887">
    <property type="term" value="F:ATP hydrolysis activity"/>
    <property type="evidence" value="ECO:0007669"/>
    <property type="project" value="InterPro"/>
</dbReference>
<dbReference type="GO" id="GO:0000287">
    <property type="term" value="F:magnesium ion binding"/>
    <property type="evidence" value="ECO:0007669"/>
    <property type="project" value="UniProtKB-UniRule"/>
</dbReference>
<dbReference type="GO" id="GO:0008556">
    <property type="term" value="F:P-type potassium transmembrane transporter activity"/>
    <property type="evidence" value="ECO:0007669"/>
    <property type="project" value="UniProtKB-UniRule"/>
</dbReference>
<dbReference type="Gene3D" id="3.40.1110.10">
    <property type="entry name" value="Calcium-transporting ATPase, cytoplasmic domain N"/>
    <property type="match status" value="1"/>
</dbReference>
<dbReference type="Gene3D" id="2.70.150.10">
    <property type="entry name" value="Calcium-transporting ATPase, cytoplasmic transduction domain A"/>
    <property type="match status" value="1"/>
</dbReference>
<dbReference type="Gene3D" id="3.40.50.1000">
    <property type="entry name" value="HAD superfamily/HAD-like"/>
    <property type="match status" value="1"/>
</dbReference>
<dbReference type="HAMAP" id="MF_00285">
    <property type="entry name" value="KdpB"/>
    <property type="match status" value="1"/>
</dbReference>
<dbReference type="InterPro" id="IPR023299">
    <property type="entry name" value="ATPase_P-typ_cyto_dom_N"/>
</dbReference>
<dbReference type="InterPro" id="IPR018303">
    <property type="entry name" value="ATPase_P-typ_P_site"/>
</dbReference>
<dbReference type="InterPro" id="IPR023298">
    <property type="entry name" value="ATPase_P-typ_TM_dom_sf"/>
</dbReference>
<dbReference type="InterPro" id="IPR008250">
    <property type="entry name" value="ATPase_P-typ_transduc_dom_A_sf"/>
</dbReference>
<dbReference type="InterPro" id="IPR036412">
    <property type="entry name" value="HAD-like_sf"/>
</dbReference>
<dbReference type="InterPro" id="IPR023214">
    <property type="entry name" value="HAD_sf"/>
</dbReference>
<dbReference type="InterPro" id="IPR006391">
    <property type="entry name" value="P-type_ATPase_bsu_IA"/>
</dbReference>
<dbReference type="InterPro" id="IPR001757">
    <property type="entry name" value="P_typ_ATPase"/>
</dbReference>
<dbReference type="InterPro" id="IPR044492">
    <property type="entry name" value="P_typ_ATPase_HD_dom"/>
</dbReference>
<dbReference type="NCBIfam" id="TIGR01494">
    <property type="entry name" value="ATPase_P-type"/>
    <property type="match status" value="2"/>
</dbReference>
<dbReference type="NCBIfam" id="TIGR01497">
    <property type="entry name" value="kdpB"/>
    <property type="match status" value="1"/>
</dbReference>
<dbReference type="PANTHER" id="PTHR43743">
    <property type="entry name" value="POTASSIUM-TRANSPORTING ATPASE ATP-BINDING SUBUNIT"/>
    <property type="match status" value="1"/>
</dbReference>
<dbReference type="PANTHER" id="PTHR43743:SF1">
    <property type="entry name" value="POTASSIUM-TRANSPORTING ATPASE ATP-BINDING SUBUNIT"/>
    <property type="match status" value="1"/>
</dbReference>
<dbReference type="Pfam" id="PF00122">
    <property type="entry name" value="E1-E2_ATPase"/>
    <property type="match status" value="1"/>
</dbReference>
<dbReference type="Pfam" id="PF00702">
    <property type="entry name" value="Hydrolase"/>
    <property type="match status" value="1"/>
</dbReference>
<dbReference type="PRINTS" id="PR00119">
    <property type="entry name" value="CATATPASE"/>
</dbReference>
<dbReference type="SFLD" id="SFLDG00002">
    <property type="entry name" value="C1.7:_P-type_atpase_like"/>
    <property type="match status" value="1"/>
</dbReference>
<dbReference type="SFLD" id="SFLDF00027">
    <property type="entry name" value="p-type_atpase"/>
    <property type="match status" value="1"/>
</dbReference>
<dbReference type="SUPFAM" id="SSF81653">
    <property type="entry name" value="Calcium ATPase, transduction domain A"/>
    <property type="match status" value="1"/>
</dbReference>
<dbReference type="SUPFAM" id="SSF81665">
    <property type="entry name" value="Calcium ATPase, transmembrane domain M"/>
    <property type="match status" value="1"/>
</dbReference>
<dbReference type="SUPFAM" id="SSF56784">
    <property type="entry name" value="HAD-like"/>
    <property type="match status" value="1"/>
</dbReference>
<dbReference type="PROSITE" id="PS00154">
    <property type="entry name" value="ATPASE_E1_E2"/>
    <property type="match status" value="1"/>
</dbReference>
<protein>
    <recommendedName>
        <fullName evidence="1">Potassium-transporting ATPase ATP-binding subunit</fullName>
        <ecNumber evidence="1">7.2.2.6</ecNumber>
    </recommendedName>
    <alternativeName>
        <fullName evidence="1">ATP phosphohydrolase [potassium-transporting] B chain</fullName>
    </alternativeName>
    <alternativeName>
        <fullName evidence="1">Potassium-binding and translocating subunit B</fullName>
    </alternativeName>
    <alternativeName>
        <fullName evidence="1">Potassium-translocating ATPase B chain</fullName>
    </alternativeName>
</protein>
<keyword id="KW-0067">ATP-binding</keyword>
<keyword id="KW-1003">Cell membrane</keyword>
<keyword id="KW-0406">Ion transport</keyword>
<keyword id="KW-0460">Magnesium</keyword>
<keyword id="KW-0472">Membrane</keyword>
<keyword id="KW-0479">Metal-binding</keyword>
<keyword id="KW-0547">Nucleotide-binding</keyword>
<keyword id="KW-0597">Phosphoprotein</keyword>
<keyword id="KW-0630">Potassium</keyword>
<keyword id="KW-0633">Potassium transport</keyword>
<keyword id="KW-1278">Translocase</keyword>
<keyword id="KW-0812">Transmembrane</keyword>
<keyword id="KW-1133">Transmembrane helix</keyword>
<keyword id="KW-0813">Transport</keyword>
<comment type="function">
    <text evidence="1">Part of the high-affinity ATP-driven potassium transport (or Kdp) system, which catalyzes the hydrolysis of ATP coupled with the electrogenic transport of potassium into the cytoplasm. This subunit is responsible for energy coupling to the transport system and for the release of the potassium ions to the cytoplasm.</text>
</comment>
<comment type="catalytic activity">
    <reaction evidence="1">
        <text>K(+)(out) + ATP + H2O = K(+)(in) + ADP + phosphate + H(+)</text>
        <dbReference type="Rhea" id="RHEA:16777"/>
        <dbReference type="ChEBI" id="CHEBI:15377"/>
        <dbReference type="ChEBI" id="CHEBI:15378"/>
        <dbReference type="ChEBI" id="CHEBI:29103"/>
        <dbReference type="ChEBI" id="CHEBI:30616"/>
        <dbReference type="ChEBI" id="CHEBI:43474"/>
        <dbReference type="ChEBI" id="CHEBI:456216"/>
        <dbReference type="EC" id="7.2.2.6"/>
    </reaction>
    <physiologicalReaction direction="left-to-right" evidence="1">
        <dbReference type="Rhea" id="RHEA:16778"/>
    </physiologicalReaction>
</comment>
<comment type="subunit">
    <text evidence="1">The system is composed of three essential subunits: KdpA, KdpB and KdpC.</text>
</comment>
<comment type="subcellular location">
    <subcellularLocation>
        <location evidence="1">Cell membrane</location>
        <topology evidence="1">Multi-pass membrane protein</topology>
    </subcellularLocation>
</comment>
<comment type="similarity">
    <text evidence="1">Belongs to the cation transport ATPase (P-type) (TC 3.A.3) family. Type IA subfamily.</text>
</comment>
<feature type="chain" id="PRO_0000046153" description="Potassium-transporting ATPase ATP-binding subunit">
    <location>
        <begin position="1"/>
        <end position="668"/>
    </location>
</feature>
<feature type="transmembrane region" description="Helical" evidence="1">
    <location>
        <begin position="31"/>
        <end position="51"/>
    </location>
</feature>
<feature type="transmembrane region" description="Helical" evidence="1">
    <location>
        <begin position="62"/>
        <end position="82"/>
    </location>
</feature>
<feature type="transmembrane region" description="Helical" evidence="1">
    <location>
        <begin position="213"/>
        <end position="233"/>
    </location>
</feature>
<feature type="transmembrane region" description="Helical" evidence="1">
    <location>
        <begin position="243"/>
        <end position="263"/>
    </location>
</feature>
<feature type="transmembrane region" description="Helical" evidence="1">
    <location>
        <begin position="573"/>
        <end position="593"/>
    </location>
</feature>
<feature type="transmembrane region" description="Helical" evidence="1">
    <location>
        <begin position="599"/>
        <end position="619"/>
    </location>
</feature>
<feature type="transmembrane region" description="Helical" evidence="1">
    <location>
        <begin position="644"/>
        <end position="664"/>
    </location>
</feature>
<feature type="active site" description="4-aspartylphosphate intermediate" evidence="1">
    <location>
        <position position="298"/>
    </location>
</feature>
<feature type="binding site" evidence="1">
    <location>
        <position position="335"/>
    </location>
    <ligand>
        <name>ATP</name>
        <dbReference type="ChEBI" id="CHEBI:30616"/>
    </ligand>
</feature>
<feature type="binding site" evidence="1">
    <location>
        <position position="339"/>
    </location>
    <ligand>
        <name>ATP</name>
        <dbReference type="ChEBI" id="CHEBI:30616"/>
    </ligand>
</feature>
<feature type="binding site" evidence="1">
    <location>
        <begin position="367"/>
        <end position="374"/>
    </location>
    <ligand>
        <name>ATP</name>
        <dbReference type="ChEBI" id="CHEBI:30616"/>
    </ligand>
</feature>
<feature type="binding site" evidence="1">
    <location>
        <position position="385"/>
    </location>
    <ligand>
        <name>ATP</name>
        <dbReference type="ChEBI" id="CHEBI:30616"/>
    </ligand>
</feature>
<feature type="binding site" evidence="1">
    <location>
        <position position="504"/>
    </location>
    <ligand>
        <name>Mg(2+)</name>
        <dbReference type="ChEBI" id="CHEBI:18420"/>
    </ligand>
</feature>
<feature type="binding site" evidence="1">
    <location>
        <position position="508"/>
    </location>
    <ligand>
        <name>Mg(2+)</name>
        <dbReference type="ChEBI" id="CHEBI:18420"/>
    </ligand>
</feature>
<proteinExistence type="inferred from homology"/>
<sequence length="668" mass="73105">MNQNIIYTVYGDLKLTLKNMRPDVLLHNPVMFLTEVSLFVSIFIYIFPSFFGVPYTGTYRSFYVAVVVLLFLTVFFSSISTALSEGKSKAITDSLKKFKTDVIAHVQKDGNIVDVRSNELKKNDIIIIYKDEIVPIDGEVIEGSGYVDESNVTGESRAVMKVIGDTVTGSTRLVTDKLKIRATADPGSTFIDKMIELVEKSTREKTPNEISLTVFLSGLTLIFLVITASIFAISHYFGRTANIVMLIVLLIALIPTTIGALLPAIGIAAINKVSEYNIIAKSGRAIENAGDIDTIILDKTGTITIGERKAVKFYPNKGISDVEFAKLAAMSSYYDQTKEGLSIFELAKKQGAEISKDDLKGYEFIPFSSETKFSGIQSPSDTVIKGSLKALKEKFQVADEFIEALCKEISMRGGTAIPVVHNGKFAGVIELQDLIKPGIKERISEIKNMDIKTVMCTGDDEVTAQYISAQAGIDEYIANSKPVDKYNVVIREKEGQRMVAMVGDGTNDAPALAKADVGLAMNNGTQAAKEAANMIDLDSNPTKLMDVIFLGKQILITRGSLTTFSIANDISKYFVIIPAIFYMFPSLSLVNILDLTDPIVAVTSALIFNTIIIVFLIPLALGGVHYKPTSISEMLKRNLMIYGIGGVITPFIAIKLIYMLLIAWGVTW</sequence>
<accession>Q97BF6</accession>